<sequence>MGKKQKNKSEDSTKDDIDLDALAAEIEGAGAAKEQEPQKSKGKKKKEKKKQDFDEDDILKELEELSLEAQGIKADRETVAVKPTENNEEEFTSKDKKKKGQKGKKQSFDDNDSEELEDKDSKSKKTAKPKVEMYSGSDDDDDFNKLPKKAKGKAQKSNKKWDGSEEDEDNSKKIKERSRINSSGESGDESDEFLQSRKGQKKNQKNKPGPNIESGNEDDDASFKIKTVAQKKAEKKERERKKRDEEKAKLRKLKEKEELETGKKDQSKQKESQRKFEEETVKSKVTVDTGVIPASEEKAETPTAAEDDNEGDKKKKDKKKKKGEKEEKEKEKKKGPSKATVKAMQEALAKLKEEEERQKREEEERIKRLEELEAKRKEEERLEQEKRERKKQKEKERKERLKKEGKLLTKSQREARARAEATLKLLQAQGVEVPSKDSLPKKRPIYEDKKRKKIPQQLESKEVSESMELCAAVEVMEQGVPEKEETPPPVEPEEEEDTEDAGLDDWEAMASDEETEKVEGNKVHIEVKENPEEEEEEEEEEEEDEESEEEEEEEGESEGSEGDEEDEKVSDEKDSGKTLDKKPSKEMSSDSEYDSDDDRTKEERAYDKAKRRIEKRRLEHSKNVNTEKLRAPIICVLGHVDTGKTKILDKLRHTHVQDGEAGGITQQIGATNVPLEAINEQTKMIKNFDRENVRIPGMLIIDTPGHESFSNLRNRGSSLCDIAILVVDIMHGLEPQTIESINLLKSKKCPFIVALNKIDRLYDWKKSPDSDVAATLKKQKKNTKDEFEERAKAIIVEFAQQGLNAALFYENKDPRTFVSLVPTSAHTGDGMGSLIYLLVELTQTMLSKRLAHCEELRAQVMEVKALPGMGTTIDVILINGRLKEGDTIIVPGVEGPIVTQIRGLLLPPPMKELRVKNQYEKHKEVEAAQGVKILGKDLEKTLAGLPLLVAYKEDEIPVLKDELIHELKQTLNAIKLEEKGVYVQASTLGSLEALLEFLKTSEVPYAGINIGPVHKKDVMKASVMLEHDPQYAVILAFDVRIERDAQEMADSLGVRIFSAEIIYHLFDAFTKYRQDYKKQKQEEFKHIAVFPCKIKILPQYIFNSRDPIVMGVTVEAGQVKQGTPMCVPSKNFVDIGIVTSIEINHKQVDVAKKGQEVCVKIEPIPGESPKMFGRHFEATDILVSKISRQSIDALKDWFRDEMQKSDWQLIVELKKVFEII</sequence>
<name>IF2P_HUMAN</name>
<evidence type="ECO:0000250" key="1">
    <source>
        <dbReference type="UniProtKB" id="B2GUV7"/>
    </source>
</evidence>
<evidence type="ECO:0000250" key="2">
    <source>
        <dbReference type="UniProtKB" id="G0S8G9"/>
    </source>
</evidence>
<evidence type="ECO:0000250" key="3">
    <source>
        <dbReference type="UniProtKB" id="Q05D44"/>
    </source>
</evidence>
<evidence type="ECO:0000255" key="4">
    <source>
        <dbReference type="PROSITE-ProRule" id="PRU01059"/>
    </source>
</evidence>
<evidence type="ECO:0000256" key="5">
    <source>
        <dbReference type="SAM" id="MobiDB-lite"/>
    </source>
</evidence>
<evidence type="ECO:0000269" key="6">
    <source>
    </source>
</evidence>
<evidence type="ECO:0000269" key="7">
    <source>
    </source>
</evidence>
<evidence type="ECO:0000269" key="8">
    <source>
    </source>
</evidence>
<evidence type="ECO:0000269" key="9">
    <source>
    </source>
</evidence>
<evidence type="ECO:0000269" key="10">
    <source>
    </source>
</evidence>
<evidence type="ECO:0000269" key="11">
    <source>
    </source>
</evidence>
<evidence type="ECO:0000269" key="12">
    <source ref="5"/>
</evidence>
<evidence type="ECO:0000305" key="13"/>
<evidence type="ECO:0000305" key="14">
    <source>
    </source>
</evidence>
<evidence type="ECO:0000312" key="15">
    <source>
        <dbReference type="PDB" id="7TQL"/>
    </source>
</evidence>
<evidence type="ECO:0007744" key="16">
    <source>
        <dbReference type="PDB" id="7TQL"/>
    </source>
</evidence>
<evidence type="ECO:0007744" key="17">
    <source>
    </source>
</evidence>
<evidence type="ECO:0007744" key="18">
    <source>
    </source>
</evidence>
<evidence type="ECO:0007744" key="19">
    <source>
    </source>
</evidence>
<evidence type="ECO:0007744" key="20">
    <source>
    </source>
</evidence>
<evidence type="ECO:0007744" key="21">
    <source>
    </source>
</evidence>
<evidence type="ECO:0007744" key="22">
    <source>
    </source>
</evidence>
<evidence type="ECO:0007744" key="23">
    <source>
    </source>
</evidence>
<evidence type="ECO:0007744" key="24">
    <source>
    </source>
</evidence>
<evidence type="ECO:0007744" key="25">
    <source>
    </source>
</evidence>
<evidence type="ECO:0007744" key="26">
    <source>
    </source>
</evidence>
<evidence type="ECO:0007744" key="27">
    <source>
    </source>
</evidence>
<evidence type="ECO:0007744" key="28">
    <source>
    </source>
</evidence>
<evidence type="ECO:0007829" key="29">
    <source>
        <dbReference type="PDB" id="7TQL"/>
    </source>
</evidence>
<gene>
    <name type="primary">EIF5B</name>
    <name type="synonym">IF2</name>
    <name type="synonym">KIAA0741</name>
</gene>
<organism>
    <name type="scientific">Homo sapiens</name>
    <name type="common">Human</name>
    <dbReference type="NCBI Taxonomy" id="9606"/>
    <lineage>
        <taxon>Eukaryota</taxon>
        <taxon>Metazoa</taxon>
        <taxon>Chordata</taxon>
        <taxon>Craniata</taxon>
        <taxon>Vertebrata</taxon>
        <taxon>Euteleostomi</taxon>
        <taxon>Mammalia</taxon>
        <taxon>Eutheria</taxon>
        <taxon>Euarchontoglires</taxon>
        <taxon>Primates</taxon>
        <taxon>Haplorrhini</taxon>
        <taxon>Catarrhini</taxon>
        <taxon>Hominidae</taxon>
        <taxon>Homo</taxon>
    </lineage>
</organism>
<reference key="1">
    <citation type="journal article" date="1999" name="Biochem. J.">
        <title>Cloning and characterization of hIF2, a human homologue of bacterial translation initiation factor 2 and its interaction with HIV-1 matrix.</title>
        <authorList>
            <person name="Wilson S.A."/>
            <person name="Sieiro-Vazquez C."/>
            <person name="Edwards N.J."/>
            <person name="Iourin O."/>
            <person name="Byles E.D."/>
            <person name="Kotsopoulou E."/>
            <person name="Adamson C.S."/>
            <person name="Kingsman S.M."/>
            <person name="Kingsman A.J."/>
            <person name="Martin-Rendon E."/>
        </authorList>
    </citation>
    <scope>NUCLEOTIDE SEQUENCE [MRNA]</scope>
    <scope>VARIANT THR-522</scope>
    <source>
        <tissue>Cervix carcinoma</tissue>
    </source>
</reference>
<reference key="2">
    <citation type="journal article" date="1999" name="Proc. Natl. Acad. Sci. U.S.A.">
        <title>Universal conservation in translation initiation revealed by human and archaeal homologs of bacterial translation initiation factor IF2.</title>
        <authorList>
            <person name="Lee J.H."/>
            <person name="Choi S.K."/>
            <person name="Roll-Mecak A."/>
            <person name="Burley S.K."/>
            <person name="Dever T.E."/>
        </authorList>
    </citation>
    <scope>NUCLEOTIDE SEQUENCE [MRNA]</scope>
    <scope>MUTAGENESIS OF VAL-640; HIS-706 AND ASP-759</scope>
    <scope>CHARACTERIZATION</scope>
    <scope>VARIANT THR-522</scope>
    <source>
        <tissue>Testis</tissue>
    </source>
</reference>
<reference key="3">
    <citation type="journal article" date="1998" name="DNA Res.">
        <title>Prediction of the coding sequences of unidentified human genes. XI. The complete sequences of 100 new cDNA clones from brain which code for large proteins in vitro.</title>
        <authorList>
            <person name="Nagase T."/>
            <person name="Ishikawa K."/>
            <person name="Suyama M."/>
            <person name="Kikuno R."/>
            <person name="Miyajima N."/>
            <person name="Tanaka A."/>
            <person name="Kotani H."/>
            <person name="Nomura N."/>
            <person name="Ohara O."/>
        </authorList>
    </citation>
    <scope>NUCLEOTIDE SEQUENCE [LARGE SCALE MRNA]</scope>
    <source>
        <tissue>Brain</tissue>
    </source>
</reference>
<reference key="4">
    <citation type="journal article" date="2005" name="Nature">
        <title>Generation and annotation of the DNA sequences of human chromosomes 2 and 4.</title>
        <authorList>
            <person name="Hillier L.W."/>
            <person name="Graves T.A."/>
            <person name="Fulton R.S."/>
            <person name="Fulton L.A."/>
            <person name="Pepin K.H."/>
            <person name="Minx P."/>
            <person name="Wagner-McPherson C."/>
            <person name="Layman D."/>
            <person name="Wylie K."/>
            <person name="Sekhon M."/>
            <person name="Becker M.C."/>
            <person name="Fewell G.A."/>
            <person name="Delehaunty K.D."/>
            <person name="Miner T.L."/>
            <person name="Nash W.E."/>
            <person name="Kremitzki C."/>
            <person name="Oddy L."/>
            <person name="Du H."/>
            <person name="Sun H."/>
            <person name="Bradshaw-Cordum H."/>
            <person name="Ali J."/>
            <person name="Carter J."/>
            <person name="Cordes M."/>
            <person name="Harris A."/>
            <person name="Isak A."/>
            <person name="van Brunt A."/>
            <person name="Nguyen C."/>
            <person name="Du F."/>
            <person name="Courtney L."/>
            <person name="Kalicki J."/>
            <person name="Ozersky P."/>
            <person name="Abbott S."/>
            <person name="Armstrong J."/>
            <person name="Belter E.A."/>
            <person name="Caruso L."/>
            <person name="Cedroni M."/>
            <person name="Cotton M."/>
            <person name="Davidson T."/>
            <person name="Desai A."/>
            <person name="Elliott G."/>
            <person name="Erb T."/>
            <person name="Fronick C."/>
            <person name="Gaige T."/>
            <person name="Haakenson W."/>
            <person name="Haglund K."/>
            <person name="Holmes A."/>
            <person name="Harkins R."/>
            <person name="Kim K."/>
            <person name="Kruchowski S.S."/>
            <person name="Strong C.M."/>
            <person name="Grewal N."/>
            <person name="Goyea E."/>
            <person name="Hou S."/>
            <person name="Levy A."/>
            <person name="Martinka S."/>
            <person name="Mead K."/>
            <person name="McLellan M.D."/>
            <person name="Meyer R."/>
            <person name="Randall-Maher J."/>
            <person name="Tomlinson C."/>
            <person name="Dauphin-Kohlberg S."/>
            <person name="Kozlowicz-Reilly A."/>
            <person name="Shah N."/>
            <person name="Swearengen-Shahid S."/>
            <person name="Snider J."/>
            <person name="Strong J.T."/>
            <person name="Thompson J."/>
            <person name="Yoakum M."/>
            <person name="Leonard S."/>
            <person name="Pearman C."/>
            <person name="Trani L."/>
            <person name="Radionenko M."/>
            <person name="Waligorski J.E."/>
            <person name="Wang C."/>
            <person name="Rock S.M."/>
            <person name="Tin-Wollam A.-M."/>
            <person name="Maupin R."/>
            <person name="Latreille P."/>
            <person name="Wendl M.C."/>
            <person name="Yang S.-P."/>
            <person name="Pohl C."/>
            <person name="Wallis J.W."/>
            <person name="Spieth J."/>
            <person name="Bieri T.A."/>
            <person name="Berkowicz N."/>
            <person name="Nelson J.O."/>
            <person name="Osborne J."/>
            <person name="Ding L."/>
            <person name="Meyer R."/>
            <person name="Sabo A."/>
            <person name="Shotland Y."/>
            <person name="Sinha P."/>
            <person name="Wohldmann P.E."/>
            <person name="Cook L.L."/>
            <person name="Hickenbotham M.T."/>
            <person name="Eldred J."/>
            <person name="Williams D."/>
            <person name="Jones T.A."/>
            <person name="She X."/>
            <person name="Ciccarelli F.D."/>
            <person name="Izaurralde E."/>
            <person name="Taylor J."/>
            <person name="Schmutz J."/>
            <person name="Myers R.M."/>
            <person name="Cox D.R."/>
            <person name="Huang X."/>
            <person name="McPherson J.D."/>
            <person name="Mardis E.R."/>
            <person name="Clifton S.W."/>
            <person name="Warren W.C."/>
            <person name="Chinwalla A.T."/>
            <person name="Eddy S.R."/>
            <person name="Marra M.A."/>
            <person name="Ovcharenko I."/>
            <person name="Furey T.S."/>
            <person name="Miller W."/>
            <person name="Eichler E.E."/>
            <person name="Bork P."/>
            <person name="Suyama M."/>
            <person name="Torrents D."/>
            <person name="Waterston R.H."/>
            <person name="Wilson R.K."/>
        </authorList>
    </citation>
    <scope>NUCLEOTIDE SEQUENCE [LARGE SCALE GENOMIC DNA]</scope>
</reference>
<reference key="5">
    <citation type="submission" date="2009-03" db="UniProtKB">
        <authorList>
            <person name="Bienvenut W.V."/>
            <person name="Waridel P."/>
            <person name="Quadroni M."/>
        </authorList>
    </citation>
    <scope>PROTEIN SEQUENCE OF 9-33; 77-94; 106-122; 180-197; 206-224; 285-298; 425-436; 629-644; 653-683; 695-713; 749-757; 766-777; 882-902; 1000-1015; 1044-1055; 1096-1120 AND 1175-1185</scope>
    <scope>PHOSPHORYLATION AT SER-190</scope>
    <scope>IDENTIFICATION BY MASS SPECTROMETRY</scope>
    <source>
        <tissue>Cervix carcinoma</tissue>
    </source>
</reference>
<reference key="6">
    <citation type="journal article" date="2007" name="BMC Genomics">
        <title>The full-ORF clone resource of the German cDNA consortium.</title>
        <authorList>
            <person name="Bechtel S."/>
            <person name="Rosenfelder H."/>
            <person name="Duda A."/>
            <person name="Schmidt C.P."/>
            <person name="Ernst U."/>
            <person name="Wellenreuther R."/>
            <person name="Mehrle A."/>
            <person name="Schuster C."/>
            <person name="Bahr A."/>
            <person name="Bloecker H."/>
            <person name="Heubner D."/>
            <person name="Hoerlein A."/>
            <person name="Michel G."/>
            <person name="Wedler H."/>
            <person name="Koehrer K."/>
            <person name="Ottenwaelder B."/>
            <person name="Poustka A."/>
            <person name="Wiemann S."/>
            <person name="Schupp I."/>
        </authorList>
    </citation>
    <scope>NUCLEOTIDE SEQUENCE [LARGE SCALE MRNA] OF 89-1220</scope>
    <source>
        <tissue>Testis</tissue>
    </source>
</reference>
<reference key="7">
    <citation type="journal article" date="2001" name="Yeast">
        <title>Characterization of 16 novel human genes showing high similarity to yeast sequences.</title>
        <authorList>
            <person name="Stanchi F."/>
            <person name="Bertocco E."/>
            <person name="Toppo S."/>
            <person name="Dioguardi R."/>
            <person name="Simionati B."/>
            <person name="Cannata N."/>
            <person name="Zimbello R."/>
            <person name="Lanfranchi G."/>
            <person name="Valle G."/>
        </authorList>
    </citation>
    <scope>NUCLEOTIDE SEQUENCE [MRNA] OF 833-1220</scope>
</reference>
<reference key="8">
    <citation type="journal article" date="2000" name="Nature">
        <title>The joining of ribosomal subunits in eukaryotes requires eIF5B.</title>
        <authorList>
            <person name="Pestova T.V."/>
            <person name="Lomakin I.B."/>
            <person name="Lee J.H."/>
            <person name="Choi S.K."/>
            <person name="Dever T.E."/>
            <person name="Hellen C.U."/>
        </authorList>
    </citation>
    <scope>FUNCTION</scope>
    <scope>CATALYTIC ACTIVITY</scope>
    <scope>BIOPHYSICOCHEMICAL PROPERTIES</scope>
</reference>
<reference key="9">
    <citation type="journal article" date="2003" name="Proc. Natl. Acad. Sci. U.S.A.">
        <title>Mapping the binding interface between human eukaryotic initiation factors 1A and 5B: a new interaction between old partners.</title>
        <authorList>
            <person name="Marintchev A."/>
            <person name="Kolupaeva V.G."/>
            <person name="Pestova T.V."/>
            <person name="Wagner G."/>
        </authorList>
    </citation>
    <scope>INTERACTION WITH EIF1AX</scope>
</reference>
<reference key="10">
    <citation type="journal article" date="2006" name="Cell">
        <title>Global, in vivo, and site-specific phosphorylation dynamics in signaling networks.</title>
        <authorList>
            <person name="Olsen J.V."/>
            <person name="Blagoev B."/>
            <person name="Gnad F."/>
            <person name="Macek B."/>
            <person name="Kumar C."/>
            <person name="Mortensen P."/>
            <person name="Mann M."/>
        </authorList>
    </citation>
    <scope>PHOSPHORYLATION [LARGE SCALE ANALYSIS] AT SER-107; SER-113; SER-164 AND SER-214</scope>
    <scope>IDENTIFICATION BY MASS SPECTROMETRY [LARGE SCALE ANALYSIS]</scope>
    <source>
        <tissue>Cervix carcinoma</tissue>
    </source>
</reference>
<reference key="11">
    <citation type="journal article" date="2007" name="Electrophoresis">
        <title>Toward a global characterization of the phosphoproteome in prostate cancer cells: identification of phosphoproteins in the LNCaP cell line.</title>
        <authorList>
            <person name="Giorgianni F."/>
            <person name="Zhao Y."/>
            <person name="Desiderio D.M."/>
            <person name="Beranova-Giorgianni S."/>
        </authorList>
    </citation>
    <scope>PHOSPHORYLATION [LARGE SCALE ANALYSIS] AT SER-214</scope>
    <scope>IDENTIFICATION BY MASS SPECTROMETRY [LARGE SCALE ANALYSIS]</scope>
    <source>
        <tissue>Prostate cancer</tissue>
    </source>
</reference>
<reference key="12">
    <citation type="journal article" date="2007" name="J. Proteome Res.">
        <title>Improved titanium dioxide enrichment of phosphopeptides from HeLa cells and high confident phosphopeptide identification by cross-validation of MS/MS and MS/MS/MS spectra.</title>
        <authorList>
            <person name="Yu L.R."/>
            <person name="Zhu Z."/>
            <person name="Chan K.C."/>
            <person name="Issaq H.J."/>
            <person name="Dimitrov D.S."/>
            <person name="Veenstra T.D."/>
        </authorList>
    </citation>
    <scope>PHOSPHORYLATION [LARGE SCALE ANALYSIS] AT SER-214</scope>
    <scope>IDENTIFICATION BY MASS SPECTROMETRY [LARGE SCALE ANALYSIS]</scope>
    <source>
        <tissue>Cervix carcinoma</tissue>
    </source>
</reference>
<reference key="13">
    <citation type="journal article" date="2008" name="J. Proteome Res.">
        <title>Phosphorylation analysis of primary human T lymphocytes using sequential IMAC and titanium oxide enrichment.</title>
        <authorList>
            <person name="Carrascal M."/>
            <person name="Ovelleiro D."/>
            <person name="Casas V."/>
            <person name="Gay M."/>
            <person name="Abian J."/>
        </authorList>
    </citation>
    <scope>PHOSPHORYLATION [LARGE SCALE ANALYSIS] AT SER-214</scope>
    <scope>IDENTIFICATION BY MASS SPECTROMETRY [LARGE SCALE ANALYSIS]</scope>
    <source>
        <tissue>T-cell</tissue>
    </source>
</reference>
<reference key="14">
    <citation type="journal article" date="2008" name="J. Proteome Res.">
        <title>Phosphoproteome of resting human platelets.</title>
        <authorList>
            <person name="Zahedi R.P."/>
            <person name="Lewandrowski U."/>
            <person name="Wiesner J."/>
            <person name="Wortelkamp S."/>
            <person name="Moebius J."/>
            <person name="Schuetz C."/>
            <person name="Walter U."/>
            <person name="Gambaryan S."/>
            <person name="Sickmann A."/>
        </authorList>
    </citation>
    <scope>IDENTIFICATION BY MASS SPECTROMETRY [LARGE SCALE ANALYSIS]</scope>
    <source>
        <tissue>Platelet</tissue>
    </source>
</reference>
<reference key="15">
    <citation type="journal article" date="2008" name="Proc. Natl. Acad. Sci. U.S.A.">
        <title>A quantitative atlas of mitotic phosphorylation.</title>
        <authorList>
            <person name="Dephoure N."/>
            <person name="Zhou C."/>
            <person name="Villen J."/>
            <person name="Beausoleil S.A."/>
            <person name="Bakalarski C.E."/>
            <person name="Elledge S.J."/>
            <person name="Gygi S.P."/>
        </authorList>
    </citation>
    <scope>PHOSPHORYLATION [LARGE SCALE ANALYSIS] AT SER-107; SER-113; TYR-134; SER-135; SER-137; SER-164; SER-182; SER-183; SER-186; SER-190; THR-301; SER-547; SER-560; SER-588 AND SER-595</scope>
    <scope>IDENTIFICATION BY MASS SPECTROMETRY [LARGE SCALE ANALYSIS]</scope>
    <source>
        <tissue>Cervix carcinoma</tissue>
    </source>
</reference>
<reference key="16">
    <citation type="journal article" date="2008" name="Proteomics">
        <title>Large-scale phosphoproteome analysis of human liver tissue by enrichment and fractionation of phosphopeptides with strong anion exchange chromatography.</title>
        <authorList>
            <person name="Han G."/>
            <person name="Ye M."/>
            <person name="Zhou H."/>
            <person name="Jiang X."/>
            <person name="Feng S."/>
            <person name="Jiang X."/>
            <person name="Tian R."/>
            <person name="Wan D."/>
            <person name="Zou H."/>
            <person name="Gu J."/>
        </authorList>
    </citation>
    <scope>PHOSPHORYLATION [LARGE SCALE ANALYSIS] AT SER-107; SER-113 AND SER-164</scope>
    <scope>IDENTIFICATION BY MASS SPECTROMETRY [LARGE SCALE ANALYSIS]</scope>
    <source>
        <tissue>Liver</tissue>
    </source>
</reference>
<reference key="17">
    <citation type="journal article" date="2008" name="Virology">
        <title>Cleavage of eukaryotic initiation factor eIF5B by enterovirus 3C proteases.</title>
        <authorList>
            <person name="de Breyne S."/>
            <person name="Bonderoff J.M."/>
            <person name="Chumakov K.M."/>
            <person name="Lloyd R.E."/>
            <person name="Hellen C.U."/>
        </authorList>
    </citation>
    <scope>PROTEOLYTIC CLEAVAGE (MICROBIAL INFECTION)</scope>
</reference>
<reference key="18">
    <citation type="journal article" date="2009" name="Anal. Chem.">
        <title>Lys-N and trypsin cover complementary parts of the phosphoproteome in a refined SCX-based approach.</title>
        <authorList>
            <person name="Gauci S."/>
            <person name="Helbig A.O."/>
            <person name="Slijper M."/>
            <person name="Krijgsveld J."/>
            <person name="Heck A.J."/>
            <person name="Mohammed S."/>
        </authorList>
    </citation>
    <scope>IDENTIFICATION BY MASS SPECTROMETRY [LARGE SCALE ANALYSIS]</scope>
</reference>
<reference key="19">
    <citation type="journal article" date="2009" name="Sci. Signal.">
        <title>Quantitative phosphoproteomic analysis of T cell receptor signaling reveals system-wide modulation of protein-protein interactions.</title>
        <authorList>
            <person name="Mayya V."/>
            <person name="Lundgren D.H."/>
            <person name="Hwang S.-I."/>
            <person name="Rezaul K."/>
            <person name="Wu L."/>
            <person name="Eng J.K."/>
            <person name="Rodionov V."/>
            <person name="Han D.K."/>
        </authorList>
    </citation>
    <scope>PHOSPHORYLATION [LARGE SCALE ANALYSIS] AT SER-113; TYR-134; SER-135; SER-137; SER-164; SER-182; SER-183; SER-186 AND SER-214</scope>
    <scope>IDENTIFICATION BY MASS SPECTROMETRY [LARGE SCALE ANALYSIS]</scope>
    <source>
        <tissue>Leukemic T-cell</tissue>
    </source>
</reference>
<reference key="20">
    <citation type="journal article" date="2010" name="Sci. Signal.">
        <title>Quantitative phosphoproteomics reveals widespread full phosphorylation site occupancy during mitosis.</title>
        <authorList>
            <person name="Olsen J.V."/>
            <person name="Vermeulen M."/>
            <person name="Santamaria A."/>
            <person name="Kumar C."/>
            <person name="Miller M.L."/>
            <person name="Jensen L.J."/>
            <person name="Gnad F."/>
            <person name="Cox J."/>
            <person name="Jensen T.S."/>
            <person name="Nigg E.A."/>
            <person name="Brunak S."/>
            <person name="Mann M."/>
        </authorList>
    </citation>
    <scope>PHOSPHORYLATION [LARGE SCALE ANALYSIS] AT SER-113; SER-135; SER-137; SER-164; SER-182; SER-186; SER-190; SER-214; THR-301; SER-588; SER-589; SER-591 AND SER-595</scope>
    <scope>IDENTIFICATION BY MASS SPECTROMETRY [LARGE SCALE ANALYSIS]</scope>
    <source>
        <tissue>Cervix carcinoma</tissue>
    </source>
</reference>
<reference key="21">
    <citation type="journal article" date="2011" name="Sci. Signal.">
        <title>System-wide temporal characterization of the proteome and phosphoproteome of human embryonic stem cell differentiation.</title>
        <authorList>
            <person name="Rigbolt K.T."/>
            <person name="Prokhorova T.A."/>
            <person name="Akimov V."/>
            <person name="Henningsen J."/>
            <person name="Johansen P.T."/>
            <person name="Kratchmarova I."/>
            <person name="Kassem M."/>
            <person name="Mann M."/>
            <person name="Olsen J.V."/>
            <person name="Blagoev B."/>
        </authorList>
    </citation>
    <scope>PHOSPHORYLATION [LARGE SCALE ANALYSIS] AT SER-107; SER-113; TYR-134; SER-135; SER-137; SER-164; SER-171; SER-214 AND THR-498</scope>
    <scope>IDENTIFICATION BY MASS SPECTROMETRY [LARGE SCALE ANALYSIS]</scope>
</reference>
<reference key="22">
    <citation type="journal article" date="2013" name="J. Proteome Res.">
        <title>Toward a comprehensive characterization of a human cancer cell phosphoproteome.</title>
        <authorList>
            <person name="Zhou H."/>
            <person name="Di Palma S."/>
            <person name="Preisinger C."/>
            <person name="Peng M."/>
            <person name="Polat A.N."/>
            <person name="Heck A.J."/>
            <person name="Mohammed S."/>
        </authorList>
    </citation>
    <scope>PHOSPHORYLATION [LARGE SCALE ANALYSIS] AT SER-66; SER-107; SER-113; SER-135; SER-137; SER-164; SER-186; SER-214; SER-222; SER-438 AND SER-1168</scope>
    <scope>IDENTIFICATION BY MASS SPECTROMETRY [LARGE SCALE ANALYSIS]</scope>
    <source>
        <tissue>Cervix carcinoma</tissue>
        <tissue>Erythroleukemia</tissue>
    </source>
</reference>
<reference key="23">
    <citation type="journal article" date="2014" name="J. Proteomics">
        <title>An enzyme assisted RP-RPLC approach for in-depth analysis of human liver phosphoproteome.</title>
        <authorList>
            <person name="Bian Y."/>
            <person name="Song C."/>
            <person name="Cheng K."/>
            <person name="Dong M."/>
            <person name="Wang F."/>
            <person name="Huang J."/>
            <person name="Sun D."/>
            <person name="Wang L."/>
            <person name="Ye M."/>
            <person name="Zou H."/>
        </authorList>
    </citation>
    <scope>PHOSPHORYLATION [LARGE SCALE ANALYSIS] AT SER-107; SER-113; SER-135; SER-137; SER-164; SER-182; SER-190 AND SER-214</scope>
    <scope>IDENTIFICATION BY MASS SPECTROMETRY [LARGE SCALE ANALYSIS]</scope>
    <source>
        <tissue>Liver</tissue>
    </source>
</reference>
<reference key="24">
    <citation type="journal article" date="2018" name="Biochemistry">
        <title>Human eIF5 and eIF1A compete for binding to eIF5B.</title>
        <authorList>
            <person name="Lin K.Y."/>
            <person name="Nag N."/>
            <person name="Pestova T.V."/>
            <person name="Marintchev A."/>
        </authorList>
    </citation>
    <scope>INTERACTION WITH EIF5 AND EIF1AX</scope>
</reference>
<reference evidence="15" key="25">
    <citation type="journal article" date="2022" name="Nature">
        <title>eIF5B and eIF1A reorient initiator tRNA to allow ribosomal subunit joining.</title>
        <authorList>
            <person name="Lapointe C.P."/>
            <person name="Grosely R."/>
            <person name="Sokabe M."/>
            <person name="Alvarado C."/>
            <person name="Wang J."/>
            <person name="Montabana E."/>
            <person name="Villa N."/>
            <person name="Shin B.S."/>
            <person name="Dever T.E."/>
            <person name="Fraser C.S."/>
            <person name="Fernandez I.S."/>
            <person name="Puglisi J.D."/>
        </authorList>
    </citation>
    <scope>STRUCTURE BY ELECTRON MICROSCOPY (3.40 ANGSTROMS) OF 602-1219 IN COMPLEX WITH A GTP ANALOG</scope>
    <scope>FUNCTION</scope>
    <scope>CATALYTIC ACTIVITY</scope>
    <scope>PROBABLE ACTIVE SITE</scope>
    <scope>MUTAGENESIS OF HIS-706; ARG-1105; ARG-1174; 1188-ARG-GLN-1189; ARG-1199 AND 1218-GLU-ILE-1219</scope>
    <scope>INTERACTION WITH EIF1AX</scope>
</reference>
<reference key="26">
    <citation type="journal article" date="2011" name="BMC Syst. Biol.">
        <title>Initial characterization of the human central proteome.</title>
        <authorList>
            <person name="Burkard T.R."/>
            <person name="Planyavsky M."/>
            <person name="Kaupe I."/>
            <person name="Breitwieser F.P."/>
            <person name="Buerckstuemmer T."/>
            <person name="Bennett K.L."/>
            <person name="Superti-Furga G."/>
            <person name="Colinge J."/>
        </authorList>
    </citation>
    <scope>VARIANT [LARGE SCALE ANALYSIS] THR-522</scope>
    <scope>IDENTIFICATION BY MASS SPECTROMETRY [LARGE SCALE ANALYSIS]</scope>
</reference>
<keyword id="KW-0002">3D-structure</keyword>
<keyword id="KW-0963">Cytoplasm</keyword>
<keyword id="KW-0903">Direct protein sequencing</keyword>
<keyword id="KW-0342">GTP-binding</keyword>
<keyword id="KW-0378">Hydrolase</keyword>
<keyword id="KW-0396">Initiation factor</keyword>
<keyword id="KW-0479">Metal-binding</keyword>
<keyword id="KW-0547">Nucleotide-binding</keyword>
<keyword id="KW-0597">Phosphoprotein</keyword>
<keyword id="KW-0648">Protein biosynthesis</keyword>
<keyword id="KW-1267">Proteomics identification</keyword>
<keyword id="KW-1185">Reference proteome</keyword>
<comment type="function">
    <text evidence="8 9 11">Plays a role in translation initiation (PubMed:10659855, PubMed:35732735). Ribosome-dependent GTPase that promotes the joining of the 60S ribosomal subunit to the pre-initiation complex to form the 80S initiation complex with the initiator methionine-tRNA in the P-site base paired to the start codon (PubMed:10659855, PubMed:35732735). Together with eIF1A (EIF1AX), actively orients the initiator methionine-tRNA in a conformation that allows 60S ribosomal subunit joining to form the 80S initiation complex (PubMed:12569173, PubMed:35732735). Is released after formation of the 80S initiation complex (PubMed:35732735). Its GTPase activity is not essential for ribosomal subunits joining, but GTP hydrolysis is needed for eIF1A (EIF1AX) ejection quickly followed by EIF5B release to form elongation-competent ribosomes (PubMed:10659855, PubMed:35732735). In contrast to its procaryotic homolog, does not promote recruitment of Met-rRNA to the small ribosomal subunit (PubMed:10659855).</text>
</comment>
<comment type="catalytic activity">
    <reaction evidence="8 14">
        <text>GTP + H2O = GDP + phosphate + H(+)</text>
        <dbReference type="Rhea" id="RHEA:19669"/>
        <dbReference type="ChEBI" id="CHEBI:15377"/>
        <dbReference type="ChEBI" id="CHEBI:15378"/>
        <dbReference type="ChEBI" id="CHEBI:37565"/>
        <dbReference type="ChEBI" id="CHEBI:43474"/>
        <dbReference type="ChEBI" id="CHEBI:58189"/>
        <dbReference type="EC" id="3.6.5.3"/>
    </reaction>
    <physiologicalReaction direction="left-to-right" evidence="8 14">
        <dbReference type="Rhea" id="RHEA:19670"/>
    </physiologicalReaction>
</comment>
<comment type="cofactor">
    <cofactor evidence="2">
        <name>a monovalent cation</name>
        <dbReference type="ChEBI" id="CHEBI:60242"/>
    </cofactor>
    <text evidence="2">Binds 1 monovalent cation per monomer in the active site. Structural cofactor that stabilizes the GTP-bound 'on' state. May also act as a transition state stabilizer of the hydrolysis reaction.</text>
</comment>
<comment type="biophysicochemical properties">
    <kinetics>
        <Vmax evidence="8">1.0 pmol/min/ug enzyme</Vmax>
        <text>Obtained in the presence of 40S and 60S ribosomal subunits. 60S ribosomal subunit is necessary for enzyme activation, while 40S ribosomal subunit is not.</text>
    </kinetics>
</comment>
<comment type="subunit">
    <text evidence="1 11">Interacts through its C-terminal domain (CTD) with the CTD of eIF1A (EIF1AX) or with the CTD of EIF5 (mutually exclusive) through a common binding site (PubMed:30211544). Interacts with eIF1A (EIF1AX) from the location of the start codon by the 43S complex until the formation of the 80S complex (PubMed:12569173, PubMed:35732735). Interacts with ANXA5 in a calcium and phospholipid-dependent manner (By similarity).</text>
</comment>
<comment type="interaction">
    <interactant intactId="EBI-928530">
        <id>O60841</id>
    </interactant>
    <interactant intactId="EBI-286439">
        <id>O14602</id>
        <label>EIF1AY</label>
    </interactant>
    <organismsDiffer>false</organismsDiffer>
    <experiments>2</experiments>
</comment>
<comment type="interaction">
    <interactant intactId="EBI-928530">
        <id>O60841</id>
    </interactant>
    <interactant intactId="EBI-913209">
        <id>P14921</id>
        <label>ETS1</label>
    </interactant>
    <organismsDiffer>false</organismsDiffer>
    <experiments>2</experiments>
</comment>
<comment type="interaction">
    <interactant intactId="EBI-928530">
        <id>O60841</id>
    </interactant>
    <interactant intactId="EBI-747754">
        <id>P28799</id>
        <label>GRN</label>
    </interactant>
    <organismsDiffer>false</organismsDiffer>
    <experiments>3</experiments>
</comment>
<comment type="interaction">
    <interactant intactId="EBI-928530">
        <id>O60841</id>
    </interactant>
    <interactant intactId="EBI-988601">
        <id>O43933</id>
        <label>PEX1</label>
    </interactant>
    <organismsDiffer>false</organismsDiffer>
    <experiments>3</experiments>
</comment>
<comment type="interaction">
    <interactant intactId="EBI-928530">
        <id>O60841</id>
    </interactant>
    <interactant intactId="EBI-720609">
        <id>O76024</id>
        <label>WFS1</label>
    </interactant>
    <organismsDiffer>false</organismsDiffer>
    <experiments>3</experiments>
</comment>
<comment type="subcellular location">
    <subcellularLocation>
        <location evidence="3">Cytoplasm</location>
    </subcellularLocation>
</comment>
<comment type="PTM">
    <text evidence="10">(Microbial infection) Cleaved and inactivated by the protease 3C of poliovirus, Coxsackievirus B3 and Human rhinovirus 14, allowing the virus to shutoff the host cell translation.</text>
</comment>
<comment type="similarity">
    <text evidence="13">Belongs to the TRAFAC class translation factor GTPase superfamily. Classic translation factor GTPase family. IF-2 subfamily.</text>
</comment>
<comment type="sequence caution" evidence="13">
    <conflict type="erroneous initiation">
        <sequence resource="EMBL-CDS" id="BAA34461"/>
    </conflict>
    <text>Truncated N-terminus.</text>
</comment>
<proteinExistence type="evidence at protein level"/>
<dbReference type="EC" id="3.6.5.3"/>
<dbReference type="EMBL" id="AJ006776">
    <property type="protein sequence ID" value="CAB44357.1"/>
    <property type="molecule type" value="mRNA"/>
</dbReference>
<dbReference type="EMBL" id="AF078035">
    <property type="protein sequence ID" value="AAD16006.1"/>
    <property type="molecule type" value="mRNA"/>
</dbReference>
<dbReference type="EMBL" id="AC018690">
    <property type="protein sequence ID" value="AAY24313.1"/>
    <property type="molecule type" value="Genomic_DNA"/>
</dbReference>
<dbReference type="EMBL" id="AC079447">
    <property type="protein sequence ID" value="AAX93258.1"/>
    <property type="molecule type" value="Genomic_DNA"/>
</dbReference>
<dbReference type="EMBL" id="AB018284">
    <property type="protein sequence ID" value="BAA34461.2"/>
    <property type="status" value="ALT_INIT"/>
    <property type="molecule type" value="mRNA"/>
</dbReference>
<dbReference type="EMBL" id="AL133563">
    <property type="protein sequence ID" value="CAB63717.1"/>
    <property type="molecule type" value="mRNA"/>
</dbReference>
<dbReference type="EMBL" id="AJ006412">
    <property type="protein sequence ID" value="CAA07018.1"/>
    <property type="molecule type" value="mRNA"/>
</dbReference>
<dbReference type="CCDS" id="CCDS42721.1"/>
<dbReference type="PIR" id="T43483">
    <property type="entry name" value="T43483"/>
</dbReference>
<dbReference type="RefSeq" id="NP_056988.3">
    <property type="nucleotide sequence ID" value="NM_015904.3"/>
</dbReference>
<dbReference type="PDB" id="7TQL">
    <property type="method" value="EM"/>
    <property type="resolution" value="3.40 A"/>
    <property type="chains" value="1=602-1219"/>
</dbReference>
<dbReference type="PDB" id="8PJ3">
    <property type="method" value="EM"/>
    <property type="resolution" value="3.70 A"/>
    <property type="chains" value="0=1-1220"/>
</dbReference>
<dbReference type="PDB" id="8PJ4">
    <property type="method" value="EM"/>
    <property type="resolution" value="3.20 A"/>
    <property type="chains" value="0=1-1220"/>
</dbReference>
<dbReference type="PDB" id="8PJ5">
    <property type="method" value="EM"/>
    <property type="resolution" value="2.90 A"/>
    <property type="chains" value="0=1-1220"/>
</dbReference>
<dbReference type="PDBsum" id="7TQL"/>
<dbReference type="PDBsum" id="8PJ3"/>
<dbReference type="PDBsum" id="8PJ4"/>
<dbReference type="PDBsum" id="8PJ5"/>
<dbReference type="EMDB" id="EMD-17698"/>
<dbReference type="EMDB" id="EMD-17699"/>
<dbReference type="EMDB" id="EMD-17700"/>
<dbReference type="EMDB" id="EMD-26067"/>
<dbReference type="SMR" id="O60841"/>
<dbReference type="BioGRID" id="115024">
    <property type="interactions" value="223"/>
</dbReference>
<dbReference type="FunCoup" id="O60841">
    <property type="interactions" value="2198"/>
</dbReference>
<dbReference type="IntAct" id="O60841">
    <property type="interactions" value="59"/>
</dbReference>
<dbReference type="MINT" id="O60841"/>
<dbReference type="STRING" id="9606.ENSP00000289371"/>
<dbReference type="ChEMBL" id="CHEMBL4105852"/>
<dbReference type="GlyGen" id="O60841">
    <property type="glycosylation" value="5 sites, 1 O-linked glycan (4 sites)"/>
</dbReference>
<dbReference type="iPTMnet" id="O60841"/>
<dbReference type="MetOSite" id="O60841"/>
<dbReference type="PhosphoSitePlus" id="O60841"/>
<dbReference type="SwissPalm" id="O60841"/>
<dbReference type="BioMuta" id="EIF5B"/>
<dbReference type="jPOST" id="O60841"/>
<dbReference type="MassIVE" id="O60841"/>
<dbReference type="PaxDb" id="9606-ENSP00000289371"/>
<dbReference type="PeptideAtlas" id="O60841"/>
<dbReference type="ProteomicsDB" id="49628"/>
<dbReference type="Pumba" id="O60841"/>
<dbReference type="Antibodypedia" id="32818">
    <property type="antibodies" value="179 antibodies from 27 providers"/>
</dbReference>
<dbReference type="DNASU" id="9669"/>
<dbReference type="Ensembl" id="ENST00000289371.11">
    <property type="protein sequence ID" value="ENSP00000289371.5"/>
    <property type="gene ID" value="ENSG00000158417.12"/>
</dbReference>
<dbReference type="GeneID" id="9669"/>
<dbReference type="KEGG" id="hsa:9669"/>
<dbReference type="MANE-Select" id="ENST00000289371.11">
    <property type="protein sequence ID" value="ENSP00000289371.5"/>
    <property type="RefSeq nucleotide sequence ID" value="NM_015904.4"/>
    <property type="RefSeq protein sequence ID" value="NP_056988.3"/>
</dbReference>
<dbReference type="UCSC" id="uc002tab.4">
    <property type="organism name" value="human"/>
</dbReference>
<dbReference type="AGR" id="HGNC:30793"/>
<dbReference type="CTD" id="9669"/>
<dbReference type="DisGeNET" id="9669"/>
<dbReference type="GeneCards" id="EIF5B"/>
<dbReference type="HGNC" id="HGNC:30793">
    <property type="gene designation" value="EIF5B"/>
</dbReference>
<dbReference type="HPA" id="ENSG00000158417">
    <property type="expression patterns" value="Low tissue specificity"/>
</dbReference>
<dbReference type="MIM" id="606086">
    <property type="type" value="gene"/>
</dbReference>
<dbReference type="neXtProt" id="NX_O60841"/>
<dbReference type="OpenTargets" id="ENSG00000158417"/>
<dbReference type="PharmGKB" id="PA134864457"/>
<dbReference type="VEuPathDB" id="HostDB:ENSG00000158417"/>
<dbReference type="eggNOG" id="KOG1144">
    <property type="taxonomic scope" value="Eukaryota"/>
</dbReference>
<dbReference type="GeneTree" id="ENSGT00940000162583"/>
<dbReference type="HOGENOM" id="CLU_002656_0_1_1"/>
<dbReference type="InParanoid" id="O60841"/>
<dbReference type="OMA" id="EFAVMLC"/>
<dbReference type="OrthoDB" id="4928at2759"/>
<dbReference type="PAN-GO" id="O60841">
    <property type="GO annotations" value="4 GO annotations based on evolutionary models"/>
</dbReference>
<dbReference type="PhylomeDB" id="O60841"/>
<dbReference type="TreeFam" id="TF101535"/>
<dbReference type="BRENDA" id="3.6.5.3">
    <property type="organism ID" value="2681"/>
</dbReference>
<dbReference type="PathwayCommons" id="O60841"/>
<dbReference type="Reactome" id="R-HSA-72706">
    <property type="pathway name" value="GTP hydrolysis and joining of the 60S ribosomal subunit"/>
</dbReference>
<dbReference type="SignaLink" id="O60841"/>
<dbReference type="SIGNOR" id="O60841"/>
<dbReference type="BioGRID-ORCS" id="9669">
    <property type="hits" value="442 hits in 1150 CRISPR screens"/>
</dbReference>
<dbReference type="CD-CODE" id="91857CE7">
    <property type="entry name" value="Nucleolus"/>
</dbReference>
<dbReference type="CD-CODE" id="DEE660B4">
    <property type="entry name" value="Stress granule"/>
</dbReference>
<dbReference type="ChiTaRS" id="EIF5B">
    <property type="organism name" value="human"/>
</dbReference>
<dbReference type="GeneWiki" id="EIF5B"/>
<dbReference type="GenomeRNAi" id="9669"/>
<dbReference type="Pharos" id="O60841">
    <property type="development level" value="Tchem"/>
</dbReference>
<dbReference type="PRO" id="PR:O60841"/>
<dbReference type="Proteomes" id="UP000005640">
    <property type="component" value="Chromosome 2"/>
</dbReference>
<dbReference type="RNAct" id="O60841">
    <property type="molecule type" value="protein"/>
</dbReference>
<dbReference type="Bgee" id="ENSG00000158417">
    <property type="expression patterns" value="Expressed in tendon of biceps brachii and 209 other cell types or tissues"/>
</dbReference>
<dbReference type="ExpressionAtlas" id="O60841">
    <property type="expression patterns" value="baseline and differential"/>
</dbReference>
<dbReference type="GO" id="GO:0005737">
    <property type="term" value="C:cytoplasm"/>
    <property type="evidence" value="ECO:0000314"/>
    <property type="project" value="UniProtKB"/>
</dbReference>
<dbReference type="GO" id="GO:0005829">
    <property type="term" value="C:cytosol"/>
    <property type="evidence" value="ECO:0000304"/>
    <property type="project" value="Reactome"/>
</dbReference>
<dbReference type="GO" id="GO:0045202">
    <property type="term" value="C:synapse"/>
    <property type="evidence" value="ECO:0007669"/>
    <property type="project" value="Ensembl"/>
</dbReference>
<dbReference type="GO" id="GO:0005525">
    <property type="term" value="F:GTP binding"/>
    <property type="evidence" value="ECO:0000314"/>
    <property type="project" value="UniProtKB"/>
</dbReference>
<dbReference type="GO" id="GO:0003924">
    <property type="term" value="F:GTPase activity"/>
    <property type="evidence" value="ECO:0000314"/>
    <property type="project" value="UniProtKB"/>
</dbReference>
<dbReference type="GO" id="GO:0046872">
    <property type="term" value="F:metal ion binding"/>
    <property type="evidence" value="ECO:0007669"/>
    <property type="project" value="UniProtKB-KW"/>
</dbReference>
<dbReference type="GO" id="GO:0003723">
    <property type="term" value="F:RNA binding"/>
    <property type="evidence" value="ECO:0007005"/>
    <property type="project" value="UniProtKB"/>
</dbReference>
<dbReference type="GO" id="GO:0003743">
    <property type="term" value="F:translation initiation factor activity"/>
    <property type="evidence" value="ECO:0000314"/>
    <property type="project" value="UniProtKB"/>
</dbReference>
<dbReference type="GO" id="GO:0000049">
    <property type="term" value="F:tRNA binding"/>
    <property type="evidence" value="ECO:0000314"/>
    <property type="project" value="UniProtKB"/>
</dbReference>
<dbReference type="GO" id="GO:0006446">
    <property type="term" value="P:regulation of translational initiation"/>
    <property type="evidence" value="ECO:0000314"/>
    <property type="project" value="UniProtKB"/>
</dbReference>
<dbReference type="GO" id="GO:0042255">
    <property type="term" value="P:ribosome assembly"/>
    <property type="evidence" value="ECO:0000314"/>
    <property type="project" value="UniProtKB"/>
</dbReference>
<dbReference type="GO" id="GO:0006413">
    <property type="term" value="P:translational initiation"/>
    <property type="evidence" value="ECO:0000318"/>
    <property type="project" value="GO_Central"/>
</dbReference>
<dbReference type="CDD" id="cd03703">
    <property type="entry name" value="aeIF5B_II"/>
    <property type="match status" value="1"/>
</dbReference>
<dbReference type="CDD" id="cd16266">
    <property type="entry name" value="IF2_aeIF5B_IV"/>
    <property type="match status" value="1"/>
</dbReference>
<dbReference type="CDD" id="cd01887">
    <property type="entry name" value="IF2_eIF5B"/>
    <property type="match status" value="1"/>
</dbReference>
<dbReference type="FunFam" id="2.40.30.10:FF:000026">
    <property type="entry name" value="Eukaryotic translation initiation factor 5B"/>
    <property type="match status" value="1"/>
</dbReference>
<dbReference type="FunFam" id="3.40.50.10050:FF:000002">
    <property type="entry name" value="Eukaryotic translation initiation factor 5B"/>
    <property type="match status" value="1"/>
</dbReference>
<dbReference type="FunFam" id="3.40.50.300:FF:000112">
    <property type="entry name" value="Eukaryotic translation initiation factor 5B"/>
    <property type="match status" value="1"/>
</dbReference>
<dbReference type="FunFam" id="2.40.30.10:FF:000013">
    <property type="entry name" value="eukaryotic translation initiation factor 5B"/>
    <property type="match status" value="1"/>
</dbReference>
<dbReference type="Gene3D" id="3.40.50.300">
    <property type="entry name" value="P-loop containing nucleotide triphosphate hydrolases"/>
    <property type="match status" value="1"/>
</dbReference>
<dbReference type="Gene3D" id="2.40.30.10">
    <property type="entry name" value="Translation factors"/>
    <property type="match status" value="2"/>
</dbReference>
<dbReference type="Gene3D" id="3.40.50.10050">
    <property type="entry name" value="Translation initiation factor IF- 2, domain 3"/>
    <property type="match status" value="1"/>
</dbReference>
<dbReference type="InterPro" id="IPR029459">
    <property type="entry name" value="EFTU-type"/>
</dbReference>
<dbReference type="InterPro" id="IPR027417">
    <property type="entry name" value="P-loop_NTPase"/>
</dbReference>
<dbReference type="InterPro" id="IPR005225">
    <property type="entry name" value="Small_GTP-bd"/>
</dbReference>
<dbReference type="InterPro" id="IPR000795">
    <property type="entry name" value="T_Tr_GTP-bd_dom"/>
</dbReference>
<dbReference type="InterPro" id="IPR015760">
    <property type="entry name" value="TIF_IF2"/>
</dbReference>
<dbReference type="InterPro" id="IPR023115">
    <property type="entry name" value="TIF_IF2_dom3"/>
</dbReference>
<dbReference type="InterPro" id="IPR036925">
    <property type="entry name" value="TIF_IF2_dom3_sf"/>
</dbReference>
<dbReference type="InterPro" id="IPR009000">
    <property type="entry name" value="Transl_B-barrel_sf"/>
</dbReference>
<dbReference type="NCBIfam" id="NF003078">
    <property type="entry name" value="PRK04004.1"/>
    <property type="match status" value="1"/>
</dbReference>
<dbReference type="NCBIfam" id="TIGR00231">
    <property type="entry name" value="small_GTP"/>
    <property type="match status" value="1"/>
</dbReference>
<dbReference type="PANTHER" id="PTHR43381:SF4">
    <property type="entry name" value="EUKARYOTIC TRANSLATION INITIATION FACTOR 5B"/>
    <property type="match status" value="1"/>
</dbReference>
<dbReference type="PANTHER" id="PTHR43381">
    <property type="entry name" value="TRANSLATION INITIATION FACTOR IF-2-RELATED"/>
    <property type="match status" value="1"/>
</dbReference>
<dbReference type="Pfam" id="PF00009">
    <property type="entry name" value="GTP_EFTU"/>
    <property type="match status" value="1"/>
</dbReference>
<dbReference type="Pfam" id="PF14578">
    <property type="entry name" value="GTP_EFTU_D4"/>
    <property type="match status" value="1"/>
</dbReference>
<dbReference type="Pfam" id="PF11987">
    <property type="entry name" value="IF-2"/>
    <property type="match status" value="1"/>
</dbReference>
<dbReference type="PRINTS" id="PR00315">
    <property type="entry name" value="ELONGATNFCT"/>
</dbReference>
<dbReference type="SUPFAM" id="SSF52156">
    <property type="entry name" value="Initiation factor IF2/eIF5b, domain 3"/>
    <property type="match status" value="1"/>
</dbReference>
<dbReference type="SUPFAM" id="SSF52540">
    <property type="entry name" value="P-loop containing nucleoside triphosphate hydrolases"/>
    <property type="match status" value="1"/>
</dbReference>
<dbReference type="SUPFAM" id="SSF50447">
    <property type="entry name" value="Translation proteins"/>
    <property type="match status" value="1"/>
</dbReference>
<dbReference type="PROSITE" id="PS51722">
    <property type="entry name" value="G_TR_2"/>
    <property type="match status" value="1"/>
</dbReference>
<feature type="chain" id="PRO_0000137294" description="Eukaryotic translation initiation factor 5B">
    <location>
        <begin position="1"/>
        <end position="1220"/>
    </location>
</feature>
<feature type="domain" description="tr-type G" evidence="4">
    <location>
        <begin position="629"/>
        <end position="846"/>
    </location>
</feature>
<feature type="region of interest" description="Disordered" evidence="5">
    <location>
        <begin position="1"/>
        <end position="417"/>
    </location>
</feature>
<feature type="region of interest" description="Disordered" evidence="5">
    <location>
        <begin position="430"/>
        <end position="608"/>
    </location>
</feature>
<feature type="region of interest" description="G1" evidence="4">
    <location>
        <begin position="638"/>
        <end position="645"/>
    </location>
</feature>
<feature type="region of interest" description="G2" evidence="4">
    <location>
        <begin position="663"/>
        <end position="667"/>
    </location>
</feature>
<feature type="region of interest" description="G3" evidence="4">
    <location>
        <begin position="702"/>
        <end position="705"/>
    </location>
</feature>
<feature type="region of interest" description="G4" evidence="4">
    <location>
        <begin position="756"/>
        <end position="759"/>
    </location>
</feature>
<feature type="region of interest" description="G5" evidence="4">
    <location>
        <begin position="824"/>
        <end position="826"/>
    </location>
</feature>
<feature type="compositionally biased region" description="Basic and acidic residues" evidence="5">
    <location>
        <begin position="7"/>
        <end position="16"/>
    </location>
</feature>
<feature type="compositionally biased region" description="Low complexity" evidence="5">
    <location>
        <begin position="20"/>
        <end position="32"/>
    </location>
</feature>
<feature type="compositionally biased region" description="Basic residues" evidence="5">
    <location>
        <begin position="95"/>
        <end position="105"/>
    </location>
</feature>
<feature type="compositionally biased region" description="Acidic residues" evidence="5">
    <location>
        <begin position="109"/>
        <end position="118"/>
    </location>
</feature>
<feature type="compositionally biased region" description="Basic residues" evidence="5">
    <location>
        <begin position="146"/>
        <end position="158"/>
    </location>
</feature>
<feature type="compositionally biased region" description="Basic and acidic residues" evidence="5">
    <location>
        <begin position="170"/>
        <end position="179"/>
    </location>
</feature>
<feature type="compositionally biased region" description="Basic and acidic residues" evidence="5">
    <location>
        <begin position="231"/>
        <end position="282"/>
    </location>
</feature>
<feature type="compositionally biased region" description="Basic and acidic residues" evidence="5">
    <location>
        <begin position="323"/>
        <end position="334"/>
    </location>
</feature>
<feature type="compositionally biased region" description="Basic and acidic residues" evidence="5">
    <location>
        <begin position="349"/>
        <end position="417"/>
    </location>
</feature>
<feature type="compositionally biased region" description="Basic and acidic residues" evidence="5">
    <location>
        <begin position="434"/>
        <end position="449"/>
    </location>
</feature>
<feature type="compositionally biased region" description="Acidic residues" evidence="5">
    <location>
        <begin position="491"/>
        <end position="516"/>
    </location>
</feature>
<feature type="compositionally biased region" description="Basic and acidic residues" evidence="5">
    <location>
        <begin position="517"/>
        <end position="530"/>
    </location>
</feature>
<feature type="compositionally biased region" description="Acidic residues" evidence="5">
    <location>
        <begin position="531"/>
        <end position="569"/>
    </location>
</feature>
<feature type="compositionally biased region" description="Basic and acidic residues" evidence="5">
    <location>
        <begin position="570"/>
        <end position="588"/>
    </location>
</feature>
<feature type="compositionally biased region" description="Basic and acidic residues" evidence="5">
    <location>
        <begin position="598"/>
        <end position="608"/>
    </location>
</feature>
<feature type="active site" evidence="14">
    <location>
        <position position="706"/>
    </location>
</feature>
<feature type="binding site" evidence="14 16">
    <location>
        <begin position="640"/>
        <end position="646"/>
    </location>
    <ligand>
        <name>GTP</name>
        <dbReference type="ChEBI" id="CHEBI:37565"/>
    </ligand>
</feature>
<feature type="binding site" evidence="14 16">
    <location>
        <begin position="663"/>
        <end position="665"/>
    </location>
    <ligand>
        <name>GTP</name>
        <dbReference type="ChEBI" id="CHEBI:37565"/>
    </ligand>
</feature>
<feature type="binding site" evidence="14 16">
    <location>
        <begin position="756"/>
        <end position="757"/>
    </location>
    <ligand>
        <name>GTP</name>
        <dbReference type="ChEBI" id="CHEBI:37565"/>
    </ligand>
</feature>
<feature type="binding site" evidence="14 16">
    <location>
        <begin position="759"/>
        <end position="760"/>
    </location>
    <ligand>
        <name>GTP</name>
        <dbReference type="ChEBI" id="CHEBI:37565"/>
    </ligand>
</feature>
<feature type="binding site" evidence="14 16">
    <location>
        <begin position="825"/>
        <end position="826"/>
    </location>
    <ligand>
        <name>GTP</name>
        <dbReference type="ChEBI" id="CHEBI:37565"/>
    </ligand>
</feature>
<feature type="site" description="(Microbial infection) Cleavage; by viral protease 3C of poliovirus, Coxsackievirus B3 and Human rhinovirus 14" evidence="10">
    <location>
        <begin position="478"/>
        <end position="479"/>
    </location>
</feature>
<feature type="modified residue" description="Phosphoserine" evidence="27">
    <location>
        <position position="66"/>
    </location>
</feature>
<feature type="modified residue" description="Phosphoserine" evidence="17 20 21 26 27 28">
    <location>
        <position position="107"/>
    </location>
</feature>
<feature type="modified residue" description="Phosphoserine" evidence="17 20 21 23 24 26 27 28">
    <location>
        <position position="113"/>
    </location>
</feature>
<feature type="modified residue" description="Phosphotyrosine" evidence="21 23 26">
    <location>
        <position position="134"/>
    </location>
</feature>
<feature type="modified residue" description="Phosphoserine" evidence="21 23 24 26 27 28">
    <location>
        <position position="135"/>
    </location>
</feature>
<feature type="modified residue" description="Phosphoserine" evidence="21 23 24 26 27 28">
    <location>
        <position position="137"/>
    </location>
</feature>
<feature type="modified residue" description="Phosphoserine" evidence="17 20 21 23 24 26 27 28">
    <location>
        <position position="164"/>
    </location>
</feature>
<feature type="modified residue" description="Phosphoserine" evidence="26">
    <location>
        <position position="171"/>
    </location>
</feature>
<feature type="modified residue" description="Phosphoserine" evidence="21 23 24 28">
    <location>
        <position position="182"/>
    </location>
</feature>
<feature type="modified residue" description="Phosphoserine" evidence="21 23">
    <location>
        <position position="183"/>
    </location>
</feature>
<feature type="modified residue" description="Phosphoserine" evidence="21 23 24 27">
    <location>
        <position position="186"/>
    </location>
</feature>
<feature type="modified residue" description="Phosphoserine" evidence="12 21 24 28">
    <location>
        <position position="190"/>
    </location>
</feature>
<feature type="modified residue" description="Phosphoserine" evidence="17 18 19 22 23 24 26 27 28">
    <location>
        <position position="214"/>
    </location>
</feature>
<feature type="modified residue" description="Phosphoserine" evidence="27">
    <location>
        <position position="222"/>
    </location>
</feature>
<feature type="modified residue" description="Phosphothreonine" evidence="21 24">
    <location>
        <position position="301"/>
    </location>
</feature>
<feature type="modified residue" description="Phosphoserine" evidence="27">
    <location>
        <position position="438"/>
    </location>
</feature>
<feature type="modified residue" description="Phosphothreonine" evidence="26">
    <location>
        <position position="498"/>
    </location>
</feature>
<feature type="modified residue" description="Phosphoserine" evidence="21">
    <location>
        <position position="547"/>
    </location>
</feature>
<feature type="modified residue" description="Phosphoserine" evidence="1">
    <location>
        <position position="557"/>
    </location>
</feature>
<feature type="modified residue" description="Phosphoserine" evidence="21">
    <location>
        <position position="560"/>
    </location>
</feature>
<feature type="modified residue" description="Phosphoserine" evidence="21 24">
    <location>
        <position position="588"/>
    </location>
</feature>
<feature type="modified residue" description="Phosphoserine" evidence="24">
    <location>
        <position position="589"/>
    </location>
</feature>
<feature type="modified residue" description="Phosphoserine" evidence="24">
    <location>
        <position position="591"/>
    </location>
</feature>
<feature type="modified residue" description="Phosphoserine" evidence="21 24">
    <location>
        <position position="595"/>
    </location>
</feature>
<feature type="modified residue" description="Phosphoserine" evidence="27">
    <location>
        <position position="1168"/>
    </location>
</feature>
<feature type="sequence variant" id="VAR_055954" description="In dbSNP:rs10642.">
    <original>S</original>
    <variation>G</variation>
    <location>
        <position position="337"/>
    </location>
</feature>
<feature type="sequence variant" id="VAR_055955" description="In dbSNP:rs3205296.">
    <original>R</original>
    <variation>G</variation>
    <location>
        <position position="360"/>
    </location>
</feature>
<feature type="sequence variant" id="VAR_060587" description="In dbSNP:rs7558074." evidence="6 7 25">
    <original>K</original>
    <variation>T</variation>
    <location>
        <position position="522"/>
    </location>
</feature>
<feature type="mutagenesis site" description="Loss of activity in vivo. Retains full activity in vitro." evidence="6">
    <original>V</original>
    <variation>G</variation>
    <location>
        <position position="640"/>
    </location>
</feature>
<feature type="mutagenesis site" description="Loss of activity; both in vivo and in vitro. Loss of EIF5B release from the 80S initiation complex, certainly due to loss of ability to hydrolyze GTP." evidence="6 11">
    <original>H</original>
    <variation>E</variation>
    <location>
        <position position="706"/>
    </location>
</feature>
<feature type="mutagenesis site" description="Loss of activity in vivo. Partial activity in vitro." evidence="6">
    <original>H</original>
    <variation>Q</variation>
    <location>
        <position position="706"/>
    </location>
</feature>
<feature type="mutagenesis site" description="Loss of activity; both in vivo and in vitro." evidence="6">
    <original>D</original>
    <variation>N</variation>
    <location>
        <position position="759"/>
    </location>
</feature>
<feature type="mutagenesis site" description="Disruption of contacts with the Met-tRNA acceptor stem; when associated with A-1174." evidence="11">
    <original>R</original>
    <variation>A</variation>
    <location>
        <position position="1105"/>
    </location>
</feature>
<feature type="mutagenesis site" description="Disruption of contacts with the Met-tRNA acceptor stem; when associated with A-1105." evidence="11">
    <original>R</original>
    <variation>A</variation>
    <location>
        <position position="1174"/>
    </location>
</feature>
<feature type="mutagenesis site" description="Disruption of contacts with eIF1A (EIF1AX); when associated with E-1199 and 1218-R-R-1219." evidence="11">
    <original>RQ</original>
    <variation>ER</variation>
    <location>
        <begin position="1188"/>
        <end position="1189"/>
    </location>
</feature>
<feature type="mutagenesis site" description="Disruption of contacts with eIF1A (EIF1AX); when associated with 1188-E-E-1189 and 1218-R-R-1219." evidence="11">
    <original>R</original>
    <variation>E</variation>
    <location>
        <position position="1199"/>
    </location>
</feature>
<feature type="mutagenesis site" description="Disruption of contacts with eIF1A (EIF1AX); when associated with 1188-E-R-1189 and E-1199." evidence="11">
    <original>EI</original>
    <variation>RR</variation>
    <location>
        <begin position="1218"/>
        <end position="1219"/>
    </location>
</feature>
<feature type="sequence conflict" description="In Ref. 3; BAA34461." evidence="13" ref="3">
    <original>E</original>
    <variation>G</variation>
    <location>
        <position position="64"/>
    </location>
</feature>
<feature type="sequence conflict" description="In Ref. 1; CAB44357." evidence="13" ref="1">
    <original>T</original>
    <variation>I</variation>
    <location>
        <position position="92"/>
    </location>
</feature>
<feature type="sequence conflict" description="In Ref. 2; AAD16006." evidence="13" ref="2">
    <original>I</original>
    <variation>M</variation>
    <location>
        <position position="180"/>
    </location>
</feature>
<feature type="sequence conflict" description="In Ref. 2; AAD16006." evidence="13" ref="2">
    <original>K</original>
    <variation>R</variation>
    <location>
        <position position="256"/>
    </location>
</feature>
<feature type="sequence conflict" description="In Ref. 2; AAD16006." evidence="13" ref="2">
    <original>E</original>
    <variation>V</variation>
    <location>
        <position position="549"/>
    </location>
</feature>
<feature type="sequence conflict" description="In Ref. 2; AAD16006." evidence="13" ref="2">
    <original>G</original>
    <variation>W</variation>
    <location>
        <position position="669"/>
    </location>
</feature>
<feature type="sequence conflict" description="In Ref. 1; CAB44357." evidence="13" ref="1">
    <original>E</original>
    <variation>K</variation>
    <location>
        <position position="894"/>
    </location>
</feature>
<feature type="helix" evidence="29">
    <location>
        <begin position="603"/>
        <end position="622"/>
    </location>
</feature>
<feature type="strand" evidence="29">
    <location>
        <begin position="633"/>
        <end position="637"/>
    </location>
</feature>
<feature type="strand" evidence="29">
    <location>
        <begin position="639"/>
        <end position="646"/>
    </location>
</feature>
<feature type="helix" evidence="29">
    <location>
        <begin position="647"/>
        <end position="652"/>
    </location>
</feature>
<feature type="strand" evidence="29">
    <location>
        <begin position="661"/>
        <end position="664"/>
    </location>
</feature>
<feature type="helix" evidence="29">
    <location>
        <begin position="676"/>
        <end position="685"/>
    </location>
</feature>
<feature type="strand" evidence="29">
    <location>
        <begin position="699"/>
        <end position="702"/>
    </location>
</feature>
<feature type="helix" evidence="29">
    <location>
        <begin position="708"/>
        <end position="711"/>
    </location>
</feature>
<feature type="strand" evidence="29">
    <location>
        <begin position="721"/>
        <end position="726"/>
    </location>
</feature>
<feature type="helix" evidence="29">
    <location>
        <begin position="729"/>
        <end position="731"/>
    </location>
</feature>
<feature type="helix" evidence="29">
    <location>
        <begin position="735"/>
        <end position="746"/>
    </location>
</feature>
<feature type="strand" evidence="29">
    <location>
        <begin position="751"/>
        <end position="755"/>
    </location>
</feature>
<feature type="strand" evidence="29">
    <location>
        <begin position="757"/>
        <end position="759"/>
    </location>
</feature>
<feature type="helix" evidence="29">
    <location>
        <begin position="772"/>
        <end position="777"/>
    </location>
</feature>
<feature type="helix" evidence="29">
    <location>
        <begin position="781"/>
        <end position="799"/>
    </location>
</feature>
<feature type="turn" evidence="29">
    <location>
        <begin position="800"/>
        <end position="802"/>
    </location>
</feature>
<feature type="strand" evidence="29">
    <location>
        <begin position="808"/>
        <end position="811"/>
    </location>
</feature>
<feature type="turn" evidence="29">
    <location>
        <begin position="814"/>
        <end position="816"/>
    </location>
</feature>
<feature type="strand" evidence="29">
    <location>
        <begin position="818"/>
        <end position="822"/>
    </location>
</feature>
<feature type="strand" evidence="29">
    <location>
        <begin position="824"/>
        <end position="827"/>
    </location>
</feature>
<feature type="helix" evidence="29">
    <location>
        <begin position="831"/>
        <end position="844"/>
    </location>
</feature>
<feature type="strand" evidence="29">
    <location>
        <begin position="857"/>
        <end position="866"/>
    </location>
</feature>
<feature type="turn" evidence="29">
    <location>
        <begin position="867"/>
        <end position="869"/>
    </location>
</feature>
<feature type="strand" evidence="29">
    <location>
        <begin position="870"/>
        <end position="879"/>
    </location>
</feature>
<feature type="strand" evidence="29">
    <location>
        <begin position="887"/>
        <end position="890"/>
    </location>
</feature>
<feature type="strand" evidence="29">
    <location>
        <begin position="897"/>
        <end position="900"/>
    </location>
</feature>
<feature type="strand" evidence="29">
    <location>
        <begin position="903"/>
        <end position="906"/>
    </location>
</feature>
<feature type="strand" evidence="29">
    <location>
        <begin position="913"/>
        <end position="915"/>
    </location>
</feature>
<feature type="strand" evidence="29">
    <location>
        <begin position="920"/>
        <end position="923"/>
    </location>
</feature>
<feature type="strand" evidence="29">
    <location>
        <begin position="927"/>
        <end position="934"/>
    </location>
</feature>
<feature type="strand" evidence="29">
    <location>
        <begin position="943"/>
        <end position="949"/>
    </location>
</feature>
<feature type="strand" evidence="29">
    <location>
        <begin position="952"/>
        <end position="954"/>
    </location>
</feature>
<feature type="turn" evidence="29">
    <location>
        <begin position="961"/>
        <end position="963"/>
    </location>
</feature>
<feature type="strand" evidence="29">
    <location>
        <begin position="981"/>
        <end position="987"/>
    </location>
</feature>
<feature type="helix" evidence="29">
    <location>
        <begin position="988"/>
        <end position="1001"/>
    </location>
</feature>
<feature type="strand" evidence="29">
    <location>
        <begin position="1005"/>
        <end position="1013"/>
    </location>
</feature>
<feature type="helix" evidence="29">
    <location>
        <begin position="1015"/>
        <end position="1025"/>
    </location>
</feature>
<feature type="turn" evidence="29">
    <location>
        <begin position="1029"/>
        <end position="1031"/>
    </location>
</feature>
<feature type="strand" evidence="29">
    <location>
        <begin position="1033"/>
        <end position="1038"/>
    </location>
</feature>
<feature type="helix" evidence="29">
    <location>
        <begin position="1043"/>
        <end position="1051"/>
    </location>
</feature>
<feature type="strand" evidence="29">
    <location>
        <begin position="1055"/>
        <end position="1061"/>
    </location>
</feature>
<feature type="helix" evidence="29">
    <location>
        <begin position="1062"/>
        <end position="1081"/>
    </location>
</feature>
<feature type="strand" evidence="29">
    <location>
        <begin position="1086"/>
        <end position="1088"/>
    </location>
</feature>
<feature type="strand" evidence="29">
    <location>
        <begin position="1092"/>
        <end position="1096"/>
    </location>
</feature>
<feature type="strand" evidence="29">
    <location>
        <begin position="1105"/>
        <end position="1117"/>
    </location>
</feature>
<feature type="strand" evidence="29">
    <location>
        <begin position="1125"/>
        <end position="1135"/>
    </location>
</feature>
<feature type="strand" evidence="29">
    <location>
        <begin position="1138"/>
        <end position="1143"/>
    </location>
</feature>
<feature type="strand" evidence="29">
    <location>
        <begin position="1157"/>
        <end position="1161"/>
    </location>
</feature>
<feature type="turn" evidence="29">
    <location>
        <begin position="1173"/>
        <end position="1175"/>
    </location>
</feature>
<feature type="strand" evidence="29">
    <location>
        <begin position="1182"/>
        <end position="1184"/>
    </location>
</feature>
<feature type="helix" evidence="29">
    <location>
        <begin position="1188"/>
        <end position="1195"/>
    </location>
</feature>
<feature type="strand" evidence="29">
    <location>
        <begin position="1199"/>
        <end position="1202"/>
    </location>
</feature>
<feature type="helix" evidence="29">
    <location>
        <begin position="1209"/>
        <end position="1214"/>
    </location>
</feature>
<feature type="turn" evidence="29">
    <location>
        <begin position="1215"/>
        <end position="1218"/>
    </location>
</feature>
<accession>O60841</accession>
<accession>O95805</accession>
<accession>Q53RV7</accession>
<accession>Q53SI8</accession>
<accession>Q9UF81</accession>
<accession>Q9UMN7</accession>
<protein>
    <recommendedName>
        <fullName>Eukaryotic translation initiation factor 5B</fullName>
        <shortName>eIF-5B</shortName>
        <ecNumber>3.6.5.3</ecNumber>
    </recommendedName>
    <alternativeName>
        <fullName>Translation initiation factor IF-2</fullName>
    </alternativeName>
</protein>